<gene>
    <name evidence="1" type="primary">truA</name>
    <name type="ordered locus">LBA0322</name>
</gene>
<sequence>MLTRYKMTMAYDGHLFHGFQLQPDQRTVQGTVEDALKKMTKGKRIIVQGSGRTDAGVHAIGQVIHFDYPGKEIPANRMILALNSMMPTDIVFTDCQIVDEDFHARYSIKGKWYRYRLSLDYFVNPFKRFYTGHFPYQLDLEKMRIAAQDLLGKHDFTSFAASGGQIKDKVRTIYYINITKDEKENEIVFDFIGSGFLYNMVRIMVAALLEIGNERRPLHDLRRVIAAKDRQEVRQTAQGSGLYLYHVFYDEIPQKYRQDQYL</sequence>
<reference key="1">
    <citation type="journal article" date="2005" name="Proc. Natl. Acad. Sci. U.S.A.">
        <title>Complete genome sequence of the probiotic lactic acid bacterium Lactobacillus acidophilus NCFM.</title>
        <authorList>
            <person name="Altermann E."/>
            <person name="Russell W.M."/>
            <person name="Azcarate-Peril M.A."/>
            <person name="Barrangou R."/>
            <person name="Buck B.L."/>
            <person name="McAuliffe O."/>
            <person name="Souther N."/>
            <person name="Dobson A."/>
            <person name="Duong T."/>
            <person name="Callanan M."/>
            <person name="Lick S."/>
            <person name="Hamrick A."/>
            <person name="Cano R."/>
            <person name="Klaenhammer T.R."/>
        </authorList>
    </citation>
    <scope>NUCLEOTIDE SEQUENCE [LARGE SCALE GENOMIC DNA]</scope>
    <source>
        <strain>ATCC 700396 / NCK56 / N2 / NCFM</strain>
    </source>
</reference>
<name>TRUA_LACAC</name>
<organism>
    <name type="scientific">Lactobacillus acidophilus (strain ATCC 700396 / NCK56 / N2 / NCFM)</name>
    <dbReference type="NCBI Taxonomy" id="272621"/>
    <lineage>
        <taxon>Bacteria</taxon>
        <taxon>Bacillati</taxon>
        <taxon>Bacillota</taxon>
        <taxon>Bacilli</taxon>
        <taxon>Lactobacillales</taxon>
        <taxon>Lactobacillaceae</taxon>
        <taxon>Lactobacillus</taxon>
    </lineage>
</organism>
<feature type="chain" id="PRO_0000057393" description="tRNA pseudouridine synthase A">
    <location>
        <begin position="1"/>
        <end position="262"/>
    </location>
</feature>
<feature type="active site" description="Nucleophile" evidence="1">
    <location>
        <position position="54"/>
    </location>
</feature>
<feature type="binding site" evidence="1">
    <location>
        <position position="113"/>
    </location>
    <ligand>
        <name>substrate</name>
    </ligand>
</feature>
<dbReference type="EC" id="5.4.99.12" evidence="1"/>
<dbReference type="EMBL" id="CP000033">
    <property type="protein sequence ID" value="AAV42214.1"/>
    <property type="molecule type" value="Genomic_DNA"/>
</dbReference>
<dbReference type="RefSeq" id="WP_003549053.1">
    <property type="nucleotide sequence ID" value="NC_006814.3"/>
</dbReference>
<dbReference type="RefSeq" id="YP_193245.1">
    <property type="nucleotide sequence ID" value="NC_006814.3"/>
</dbReference>
<dbReference type="SMR" id="Q5FM60"/>
<dbReference type="STRING" id="272621.LBA0322"/>
<dbReference type="GeneID" id="93290570"/>
<dbReference type="KEGG" id="lac:LBA0322"/>
<dbReference type="PATRIC" id="fig|272621.13.peg.308"/>
<dbReference type="eggNOG" id="COG0101">
    <property type="taxonomic scope" value="Bacteria"/>
</dbReference>
<dbReference type="HOGENOM" id="CLU_014673_0_1_9"/>
<dbReference type="OrthoDB" id="9811823at2"/>
<dbReference type="BioCyc" id="LACI272621:G1G49-316-MONOMER"/>
<dbReference type="Proteomes" id="UP000006381">
    <property type="component" value="Chromosome"/>
</dbReference>
<dbReference type="GO" id="GO:0003723">
    <property type="term" value="F:RNA binding"/>
    <property type="evidence" value="ECO:0007669"/>
    <property type="project" value="InterPro"/>
</dbReference>
<dbReference type="GO" id="GO:0160147">
    <property type="term" value="F:tRNA pseudouridine(38-40) synthase activity"/>
    <property type="evidence" value="ECO:0007669"/>
    <property type="project" value="UniProtKB-EC"/>
</dbReference>
<dbReference type="GO" id="GO:0031119">
    <property type="term" value="P:tRNA pseudouridine synthesis"/>
    <property type="evidence" value="ECO:0007669"/>
    <property type="project" value="UniProtKB-UniRule"/>
</dbReference>
<dbReference type="CDD" id="cd02570">
    <property type="entry name" value="PseudoU_synth_EcTruA"/>
    <property type="match status" value="1"/>
</dbReference>
<dbReference type="FunFam" id="3.30.70.580:FF:000001">
    <property type="entry name" value="tRNA pseudouridine synthase A"/>
    <property type="match status" value="1"/>
</dbReference>
<dbReference type="Gene3D" id="3.30.70.660">
    <property type="entry name" value="Pseudouridine synthase I, catalytic domain, C-terminal subdomain"/>
    <property type="match status" value="1"/>
</dbReference>
<dbReference type="Gene3D" id="3.30.70.580">
    <property type="entry name" value="Pseudouridine synthase I, catalytic domain, N-terminal subdomain"/>
    <property type="match status" value="1"/>
</dbReference>
<dbReference type="HAMAP" id="MF_00171">
    <property type="entry name" value="TruA"/>
    <property type="match status" value="1"/>
</dbReference>
<dbReference type="InterPro" id="IPR020103">
    <property type="entry name" value="PsdUridine_synth_cat_dom_sf"/>
</dbReference>
<dbReference type="InterPro" id="IPR001406">
    <property type="entry name" value="PsdUridine_synth_TruA"/>
</dbReference>
<dbReference type="InterPro" id="IPR020097">
    <property type="entry name" value="PsdUridine_synth_TruA_a/b_dom"/>
</dbReference>
<dbReference type="InterPro" id="IPR020095">
    <property type="entry name" value="PsdUridine_synth_TruA_C"/>
</dbReference>
<dbReference type="InterPro" id="IPR020094">
    <property type="entry name" value="TruA/RsuA/RluB/E/F_N"/>
</dbReference>
<dbReference type="NCBIfam" id="TIGR00071">
    <property type="entry name" value="hisT_truA"/>
    <property type="match status" value="1"/>
</dbReference>
<dbReference type="PANTHER" id="PTHR11142">
    <property type="entry name" value="PSEUDOURIDYLATE SYNTHASE"/>
    <property type="match status" value="1"/>
</dbReference>
<dbReference type="PANTHER" id="PTHR11142:SF0">
    <property type="entry name" value="TRNA PSEUDOURIDINE SYNTHASE-LIKE 1"/>
    <property type="match status" value="1"/>
</dbReference>
<dbReference type="Pfam" id="PF01416">
    <property type="entry name" value="PseudoU_synth_1"/>
    <property type="match status" value="2"/>
</dbReference>
<dbReference type="PIRSF" id="PIRSF001430">
    <property type="entry name" value="tRNA_psdUrid_synth"/>
    <property type="match status" value="1"/>
</dbReference>
<dbReference type="SUPFAM" id="SSF55120">
    <property type="entry name" value="Pseudouridine synthase"/>
    <property type="match status" value="1"/>
</dbReference>
<accession>Q5FM60</accession>
<comment type="function">
    <text evidence="1">Formation of pseudouridine at positions 38, 39 and 40 in the anticodon stem and loop of transfer RNAs.</text>
</comment>
<comment type="catalytic activity">
    <reaction evidence="1">
        <text>uridine(38/39/40) in tRNA = pseudouridine(38/39/40) in tRNA</text>
        <dbReference type="Rhea" id="RHEA:22376"/>
        <dbReference type="Rhea" id="RHEA-COMP:10085"/>
        <dbReference type="Rhea" id="RHEA-COMP:10087"/>
        <dbReference type="ChEBI" id="CHEBI:65314"/>
        <dbReference type="ChEBI" id="CHEBI:65315"/>
        <dbReference type="EC" id="5.4.99.12"/>
    </reaction>
</comment>
<comment type="subunit">
    <text evidence="1">Homodimer.</text>
</comment>
<comment type="similarity">
    <text evidence="1">Belongs to the tRNA pseudouridine synthase TruA family.</text>
</comment>
<keyword id="KW-0413">Isomerase</keyword>
<keyword id="KW-1185">Reference proteome</keyword>
<keyword id="KW-0819">tRNA processing</keyword>
<evidence type="ECO:0000255" key="1">
    <source>
        <dbReference type="HAMAP-Rule" id="MF_00171"/>
    </source>
</evidence>
<protein>
    <recommendedName>
        <fullName evidence="1">tRNA pseudouridine synthase A</fullName>
        <ecNumber evidence="1">5.4.99.12</ecNumber>
    </recommendedName>
    <alternativeName>
        <fullName evidence="1">tRNA pseudouridine(38-40) synthase</fullName>
    </alternativeName>
    <alternativeName>
        <fullName evidence="1">tRNA pseudouridylate synthase I</fullName>
    </alternativeName>
    <alternativeName>
        <fullName evidence="1">tRNA-uridine isomerase I</fullName>
    </alternativeName>
</protein>
<proteinExistence type="inferred from homology"/>